<keyword id="KW-0012">Acyltransferase</keyword>
<keyword id="KW-0133">Cell shape</keyword>
<keyword id="KW-0961">Cell wall biogenesis/degradation</keyword>
<keyword id="KW-0963">Cytoplasm</keyword>
<keyword id="KW-0460">Magnesium</keyword>
<keyword id="KW-0479">Metal-binding</keyword>
<keyword id="KW-0511">Multifunctional enzyme</keyword>
<keyword id="KW-0548">Nucleotidyltransferase</keyword>
<keyword id="KW-0573">Peptidoglycan synthesis</keyword>
<keyword id="KW-0677">Repeat</keyword>
<keyword id="KW-0808">Transferase</keyword>
<dbReference type="EC" id="2.7.7.23" evidence="1"/>
<dbReference type="EC" id="2.3.1.157" evidence="1"/>
<dbReference type="EMBL" id="CP000436">
    <property type="protein sequence ID" value="ABI24611.1"/>
    <property type="molecule type" value="Genomic_DNA"/>
</dbReference>
<dbReference type="SMR" id="Q0I1G0"/>
<dbReference type="KEGG" id="hso:HS_0333"/>
<dbReference type="eggNOG" id="COG1207">
    <property type="taxonomic scope" value="Bacteria"/>
</dbReference>
<dbReference type="HOGENOM" id="CLU_029499_15_2_6"/>
<dbReference type="UniPathway" id="UPA00113">
    <property type="reaction ID" value="UER00532"/>
</dbReference>
<dbReference type="UniPathway" id="UPA00113">
    <property type="reaction ID" value="UER00533"/>
</dbReference>
<dbReference type="UniPathway" id="UPA00973"/>
<dbReference type="GO" id="GO:0005737">
    <property type="term" value="C:cytoplasm"/>
    <property type="evidence" value="ECO:0007669"/>
    <property type="project" value="UniProtKB-SubCell"/>
</dbReference>
<dbReference type="GO" id="GO:0016020">
    <property type="term" value="C:membrane"/>
    <property type="evidence" value="ECO:0007669"/>
    <property type="project" value="GOC"/>
</dbReference>
<dbReference type="GO" id="GO:0019134">
    <property type="term" value="F:glucosamine-1-phosphate N-acetyltransferase activity"/>
    <property type="evidence" value="ECO:0007669"/>
    <property type="project" value="UniProtKB-UniRule"/>
</dbReference>
<dbReference type="GO" id="GO:0000287">
    <property type="term" value="F:magnesium ion binding"/>
    <property type="evidence" value="ECO:0007669"/>
    <property type="project" value="UniProtKB-UniRule"/>
</dbReference>
<dbReference type="GO" id="GO:0003977">
    <property type="term" value="F:UDP-N-acetylglucosamine diphosphorylase activity"/>
    <property type="evidence" value="ECO:0007669"/>
    <property type="project" value="UniProtKB-UniRule"/>
</dbReference>
<dbReference type="GO" id="GO:0000902">
    <property type="term" value="P:cell morphogenesis"/>
    <property type="evidence" value="ECO:0007669"/>
    <property type="project" value="UniProtKB-UniRule"/>
</dbReference>
<dbReference type="GO" id="GO:0071555">
    <property type="term" value="P:cell wall organization"/>
    <property type="evidence" value="ECO:0007669"/>
    <property type="project" value="UniProtKB-KW"/>
</dbReference>
<dbReference type="GO" id="GO:0009245">
    <property type="term" value="P:lipid A biosynthetic process"/>
    <property type="evidence" value="ECO:0007669"/>
    <property type="project" value="UniProtKB-UniRule"/>
</dbReference>
<dbReference type="GO" id="GO:0009252">
    <property type="term" value="P:peptidoglycan biosynthetic process"/>
    <property type="evidence" value="ECO:0007669"/>
    <property type="project" value="UniProtKB-UniRule"/>
</dbReference>
<dbReference type="GO" id="GO:0008360">
    <property type="term" value="P:regulation of cell shape"/>
    <property type="evidence" value="ECO:0007669"/>
    <property type="project" value="UniProtKB-KW"/>
</dbReference>
<dbReference type="GO" id="GO:0006048">
    <property type="term" value="P:UDP-N-acetylglucosamine biosynthetic process"/>
    <property type="evidence" value="ECO:0007669"/>
    <property type="project" value="UniProtKB-UniPathway"/>
</dbReference>
<dbReference type="CDD" id="cd02540">
    <property type="entry name" value="GT2_GlmU_N_bac"/>
    <property type="match status" value="1"/>
</dbReference>
<dbReference type="CDD" id="cd03353">
    <property type="entry name" value="LbH_GlmU_C"/>
    <property type="match status" value="1"/>
</dbReference>
<dbReference type="FunFam" id="3.90.550.10:FF:000006">
    <property type="entry name" value="Bifunctional protein GlmU"/>
    <property type="match status" value="1"/>
</dbReference>
<dbReference type="Gene3D" id="2.160.10.10">
    <property type="entry name" value="Hexapeptide repeat proteins"/>
    <property type="match status" value="1"/>
</dbReference>
<dbReference type="Gene3D" id="3.90.550.10">
    <property type="entry name" value="Spore Coat Polysaccharide Biosynthesis Protein SpsA, Chain A"/>
    <property type="match status" value="1"/>
</dbReference>
<dbReference type="HAMAP" id="MF_01631">
    <property type="entry name" value="GlmU"/>
    <property type="match status" value="1"/>
</dbReference>
<dbReference type="InterPro" id="IPR005882">
    <property type="entry name" value="Bifunctional_GlmU"/>
</dbReference>
<dbReference type="InterPro" id="IPR050065">
    <property type="entry name" value="GlmU-like"/>
</dbReference>
<dbReference type="InterPro" id="IPR038009">
    <property type="entry name" value="GlmU_C_LbH"/>
</dbReference>
<dbReference type="InterPro" id="IPR001451">
    <property type="entry name" value="Hexapep"/>
</dbReference>
<dbReference type="InterPro" id="IPR018357">
    <property type="entry name" value="Hexapep_transf_CS"/>
</dbReference>
<dbReference type="InterPro" id="IPR025877">
    <property type="entry name" value="MobA-like_NTP_Trfase"/>
</dbReference>
<dbReference type="InterPro" id="IPR029044">
    <property type="entry name" value="Nucleotide-diphossugar_trans"/>
</dbReference>
<dbReference type="InterPro" id="IPR011004">
    <property type="entry name" value="Trimer_LpxA-like_sf"/>
</dbReference>
<dbReference type="NCBIfam" id="TIGR01173">
    <property type="entry name" value="glmU"/>
    <property type="match status" value="1"/>
</dbReference>
<dbReference type="NCBIfam" id="NF006986">
    <property type="entry name" value="PRK09451.1"/>
    <property type="match status" value="1"/>
</dbReference>
<dbReference type="PANTHER" id="PTHR43584:SF3">
    <property type="entry name" value="BIFUNCTIONAL PROTEIN GLMU"/>
    <property type="match status" value="1"/>
</dbReference>
<dbReference type="PANTHER" id="PTHR43584">
    <property type="entry name" value="NUCLEOTIDYL TRANSFERASE"/>
    <property type="match status" value="1"/>
</dbReference>
<dbReference type="Pfam" id="PF00132">
    <property type="entry name" value="Hexapep"/>
    <property type="match status" value="3"/>
</dbReference>
<dbReference type="Pfam" id="PF12804">
    <property type="entry name" value="NTP_transf_3"/>
    <property type="match status" value="1"/>
</dbReference>
<dbReference type="SUPFAM" id="SSF53448">
    <property type="entry name" value="Nucleotide-diphospho-sugar transferases"/>
    <property type="match status" value="1"/>
</dbReference>
<dbReference type="SUPFAM" id="SSF51161">
    <property type="entry name" value="Trimeric LpxA-like enzymes"/>
    <property type="match status" value="1"/>
</dbReference>
<dbReference type="PROSITE" id="PS00101">
    <property type="entry name" value="HEXAPEP_TRANSFERASES"/>
    <property type="match status" value="1"/>
</dbReference>
<protein>
    <recommendedName>
        <fullName evidence="1">Bifunctional protein GlmU</fullName>
    </recommendedName>
    <domain>
        <recommendedName>
            <fullName evidence="1">UDP-N-acetylglucosamine pyrophosphorylase</fullName>
            <ecNumber evidence="1">2.7.7.23</ecNumber>
        </recommendedName>
        <alternativeName>
            <fullName evidence="1">N-acetylglucosamine-1-phosphate uridyltransferase</fullName>
        </alternativeName>
    </domain>
    <domain>
        <recommendedName>
            <fullName evidence="1">Glucosamine-1-phosphate N-acetyltransferase</fullName>
            <ecNumber evidence="1">2.3.1.157</ecNumber>
        </recommendedName>
    </domain>
</protein>
<name>GLMU_HISS1</name>
<feature type="chain" id="PRO_0000263133" description="Bifunctional protein GlmU">
    <location>
        <begin position="1"/>
        <end position="453"/>
    </location>
</feature>
<feature type="region of interest" description="Pyrophosphorylase" evidence="1">
    <location>
        <begin position="1"/>
        <end position="227"/>
    </location>
</feature>
<feature type="region of interest" description="Linker" evidence="1">
    <location>
        <begin position="228"/>
        <end position="248"/>
    </location>
</feature>
<feature type="region of interest" description="N-acetyltransferase" evidence="1">
    <location>
        <begin position="249"/>
        <end position="453"/>
    </location>
</feature>
<feature type="active site" description="Proton acceptor" evidence="1">
    <location>
        <position position="361"/>
    </location>
</feature>
<feature type="binding site" evidence="1">
    <location>
        <begin position="9"/>
        <end position="12"/>
    </location>
    <ligand>
        <name>UDP-N-acetyl-alpha-D-glucosamine</name>
        <dbReference type="ChEBI" id="CHEBI:57705"/>
    </ligand>
</feature>
<feature type="binding site" evidence="1">
    <location>
        <position position="23"/>
    </location>
    <ligand>
        <name>UDP-N-acetyl-alpha-D-glucosamine</name>
        <dbReference type="ChEBI" id="CHEBI:57705"/>
    </ligand>
</feature>
<feature type="binding site" evidence="1">
    <location>
        <position position="74"/>
    </location>
    <ligand>
        <name>UDP-N-acetyl-alpha-D-glucosamine</name>
        <dbReference type="ChEBI" id="CHEBI:57705"/>
    </ligand>
</feature>
<feature type="binding site" evidence="1">
    <location>
        <begin position="79"/>
        <end position="80"/>
    </location>
    <ligand>
        <name>UDP-N-acetyl-alpha-D-glucosamine</name>
        <dbReference type="ChEBI" id="CHEBI:57705"/>
    </ligand>
</feature>
<feature type="binding site" evidence="1">
    <location>
        <begin position="101"/>
        <end position="103"/>
    </location>
    <ligand>
        <name>UDP-N-acetyl-alpha-D-glucosamine</name>
        <dbReference type="ChEBI" id="CHEBI:57705"/>
    </ligand>
</feature>
<feature type="binding site" evidence="1">
    <location>
        <position position="103"/>
    </location>
    <ligand>
        <name>Mg(2+)</name>
        <dbReference type="ChEBI" id="CHEBI:18420"/>
    </ligand>
</feature>
<feature type="binding site" evidence="1">
    <location>
        <position position="138"/>
    </location>
    <ligand>
        <name>UDP-N-acetyl-alpha-D-glucosamine</name>
        <dbReference type="ChEBI" id="CHEBI:57705"/>
    </ligand>
</feature>
<feature type="binding site" evidence="1">
    <location>
        <position position="152"/>
    </location>
    <ligand>
        <name>UDP-N-acetyl-alpha-D-glucosamine</name>
        <dbReference type="ChEBI" id="CHEBI:57705"/>
    </ligand>
</feature>
<feature type="binding site" evidence="1">
    <location>
        <position position="167"/>
    </location>
    <ligand>
        <name>UDP-N-acetyl-alpha-D-glucosamine</name>
        <dbReference type="ChEBI" id="CHEBI:57705"/>
    </ligand>
</feature>
<feature type="binding site" evidence="1">
    <location>
        <position position="225"/>
    </location>
    <ligand>
        <name>Mg(2+)</name>
        <dbReference type="ChEBI" id="CHEBI:18420"/>
    </ligand>
</feature>
<feature type="binding site" evidence="1">
    <location>
        <position position="225"/>
    </location>
    <ligand>
        <name>UDP-N-acetyl-alpha-D-glucosamine</name>
        <dbReference type="ChEBI" id="CHEBI:57705"/>
    </ligand>
</feature>
<feature type="binding site" evidence="1">
    <location>
        <position position="331"/>
    </location>
    <ligand>
        <name>UDP-N-acetyl-alpha-D-glucosamine</name>
        <dbReference type="ChEBI" id="CHEBI:57705"/>
    </ligand>
</feature>
<feature type="binding site" evidence="1">
    <location>
        <position position="349"/>
    </location>
    <ligand>
        <name>UDP-N-acetyl-alpha-D-glucosamine</name>
        <dbReference type="ChEBI" id="CHEBI:57705"/>
    </ligand>
</feature>
<feature type="binding site" evidence="1">
    <location>
        <position position="364"/>
    </location>
    <ligand>
        <name>UDP-N-acetyl-alpha-D-glucosamine</name>
        <dbReference type="ChEBI" id="CHEBI:57705"/>
    </ligand>
</feature>
<feature type="binding site" evidence="1">
    <location>
        <position position="375"/>
    </location>
    <ligand>
        <name>UDP-N-acetyl-alpha-D-glucosamine</name>
        <dbReference type="ChEBI" id="CHEBI:57705"/>
    </ligand>
</feature>
<feature type="binding site" evidence="1">
    <location>
        <position position="378"/>
    </location>
    <ligand>
        <name>acetyl-CoA</name>
        <dbReference type="ChEBI" id="CHEBI:57288"/>
    </ligand>
</feature>
<feature type="binding site" evidence="1">
    <location>
        <begin position="384"/>
        <end position="385"/>
    </location>
    <ligand>
        <name>acetyl-CoA</name>
        <dbReference type="ChEBI" id="CHEBI:57288"/>
    </ligand>
</feature>
<feature type="binding site" evidence="1">
    <location>
        <position position="403"/>
    </location>
    <ligand>
        <name>acetyl-CoA</name>
        <dbReference type="ChEBI" id="CHEBI:57288"/>
    </ligand>
</feature>
<feature type="binding site" evidence="1">
    <location>
        <position position="421"/>
    </location>
    <ligand>
        <name>acetyl-CoA</name>
        <dbReference type="ChEBI" id="CHEBI:57288"/>
    </ligand>
</feature>
<feature type="binding site" evidence="1">
    <location>
        <position position="438"/>
    </location>
    <ligand>
        <name>acetyl-CoA</name>
        <dbReference type="ChEBI" id="CHEBI:57288"/>
    </ligand>
</feature>
<gene>
    <name evidence="1" type="primary">glmU</name>
    <name type="ordered locus">HS_0333</name>
</gene>
<proteinExistence type="inferred from homology"/>
<comment type="function">
    <text evidence="1">Catalyzes the last two sequential reactions in the de novo biosynthetic pathway for UDP-N-acetylglucosamine (UDP-GlcNAc). The C-terminal domain catalyzes the transfer of acetyl group from acetyl coenzyme A to glucosamine-1-phosphate (GlcN-1-P) to produce N-acetylglucosamine-1-phosphate (GlcNAc-1-P), which is converted into UDP-GlcNAc by the transfer of uridine 5-monophosphate (from uridine 5-triphosphate), a reaction catalyzed by the N-terminal domain.</text>
</comment>
<comment type="catalytic activity">
    <reaction evidence="1">
        <text>alpha-D-glucosamine 1-phosphate + acetyl-CoA = N-acetyl-alpha-D-glucosamine 1-phosphate + CoA + H(+)</text>
        <dbReference type="Rhea" id="RHEA:13725"/>
        <dbReference type="ChEBI" id="CHEBI:15378"/>
        <dbReference type="ChEBI" id="CHEBI:57287"/>
        <dbReference type="ChEBI" id="CHEBI:57288"/>
        <dbReference type="ChEBI" id="CHEBI:57776"/>
        <dbReference type="ChEBI" id="CHEBI:58516"/>
        <dbReference type="EC" id="2.3.1.157"/>
    </reaction>
</comment>
<comment type="catalytic activity">
    <reaction evidence="1">
        <text>N-acetyl-alpha-D-glucosamine 1-phosphate + UTP + H(+) = UDP-N-acetyl-alpha-D-glucosamine + diphosphate</text>
        <dbReference type="Rhea" id="RHEA:13509"/>
        <dbReference type="ChEBI" id="CHEBI:15378"/>
        <dbReference type="ChEBI" id="CHEBI:33019"/>
        <dbReference type="ChEBI" id="CHEBI:46398"/>
        <dbReference type="ChEBI" id="CHEBI:57705"/>
        <dbReference type="ChEBI" id="CHEBI:57776"/>
        <dbReference type="EC" id="2.7.7.23"/>
    </reaction>
</comment>
<comment type="cofactor">
    <cofactor evidence="1">
        <name>Mg(2+)</name>
        <dbReference type="ChEBI" id="CHEBI:18420"/>
    </cofactor>
    <text evidence="1">Binds 1 Mg(2+) ion per subunit.</text>
</comment>
<comment type="pathway">
    <text evidence="1">Nucleotide-sugar biosynthesis; UDP-N-acetyl-alpha-D-glucosamine biosynthesis; N-acetyl-alpha-D-glucosamine 1-phosphate from alpha-D-glucosamine 6-phosphate (route II): step 2/2.</text>
</comment>
<comment type="pathway">
    <text evidence="1">Nucleotide-sugar biosynthesis; UDP-N-acetyl-alpha-D-glucosamine biosynthesis; UDP-N-acetyl-alpha-D-glucosamine from N-acetyl-alpha-D-glucosamine 1-phosphate: step 1/1.</text>
</comment>
<comment type="pathway">
    <text evidence="1">Bacterial outer membrane biogenesis; LPS lipid A biosynthesis.</text>
</comment>
<comment type="subunit">
    <text evidence="1">Homotrimer.</text>
</comment>
<comment type="subcellular location">
    <subcellularLocation>
        <location evidence="1">Cytoplasm</location>
    </subcellularLocation>
</comment>
<comment type="similarity">
    <text evidence="1">In the N-terminal section; belongs to the N-acetylglucosamine-1-phosphate uridyltransferase family.</text>
</comment>
<comment type="similarity">
    <text evidence="1">In the C-terminal section; belongs to the transferase hexapeptide repeat family.</text>
</comment>
<evidence type="ECO:0000255" key="1">
    <source>
        <dbReference type="HAMAP-Rule" id="MF_01631"/>
    </source>
</evidence>
<sequence>MNKLSVVILAAGKGTRMYSDLPKVLHKIAGKPMVKHVIDTAKKLSAAQIHLIYGHGADLLKQHLADEPVNWVFQSEQLGTGHAMQQAAPFFQDDENIVMLYGDVPLISKETLECLISQKPENGIALLTVNLDNPTGYGRVIRENGTVTAIVEQKDANPEQLKITEVNTGVMVSDGASFRKWLARLDNNNAQGEYYMTDVIGLANQDGLKVVAVQAKDLMEVEGVNNRLQLANLERHFQRKQVEKLLLAGVTFADPARFDLRGELTHGKDVEIDINVIIEGTVRLGNNVFIGAGCVLKNCTIADNVEIKPYSVIEDAIVGNNAKIGPFSRLRPGAELSENTHVGNFVEIKKAQIGKGSKVNHLSYIGDAEVGHHCNIGAGVITCNYDGANKFKTLIGDNVFVGSDSQLVAPLTIASGATIGAGTTVTKDVQENELVITRVPQRHISNWQRPKRK</sequence>
<reference key="1">
    <citation type="journal article" date="2007" name="J. Bacteriol.">
        <title>Complete genome sequence of Haemophilus somnus (Histophilus somni) strain 129Pt and comparison to Haemophilus ducreyi 35000HP and Haemophilus influenzae Rd.</title>
        <authorList>
            <person name="Challacombe J.F."/>
            <person name="Duncan A.J."/>
            <person name="Brettin T.S."/>
            <person name="Bruce D."/>
            <person name="Chertkov O."/>
            <person name="Detter J.C."/>
            <person name="Han C.S."/>
            <person name="Misra M."/>
            <person name="Richardson P."/>
            <person name="Tapia R."/>
            <person name="Thayer N."/>
            <person name="Xie G."/>
            <person name="Inzana T.J."/>
        </authorList>
    </citation>
    <scope>NUCLEOTIDE SEQUENCE [LARGE SCALE GENOMIC DNA]</scope>
    <source>
        <strain>129Pt</strain>
    </source>
</reference>
<accession>Q0I1G0</accession>
<organism>
    <name type="scientific">Histophilus somni (strain 129Pt)</name>
    <name type="common">Haemophilus somnus</name>
    <dbReference type="NCBI Taxonomy" id="205914"/>
    <lineage>
        <taxon>Bacteria</taxon>
        <taxon>Pseudomonadati</taxon>
        <taxon>Pseudomonadota</taxon>
        <taxon>Gammaproteobacteria</taxon>
        <taxon>Pasteurellales</taxon>
        <taxon>Pasteurellaceae</taxon>
        <taxon>Histophilus</taxon>
    </lineage>
</organism>